<evidence type="ECO:0000255" key="1">
    <source>
        <dbReference type="HAMAP-Rule" id="MF_00183"/>
    </source>
</evidence>
<comment type="function">
    <text evidence="1">Catalyzes the NADPH-dependent rearrangement and reduction of 1-deoxy-D-xylulose-5-phosphate (DXP) to 2-C-methyl-D-erythritol 4-phosphate (MEP).</text>
</comment>
<comment type="catalytic activity">
    <reaction evidence="1">
        <text>2-C-methyl-D-erythritol 4-phosphate + NADP(+) = 1-deoxy-D-xylulose 5-phosphate + NADPH + H(+)</text>
        <dbReference type="Rhea" id="RHEA:13717"/>
        <dbReference type="ChEBI" id="CHEBI:15378"/>
        <dbReference type="ChEBI" id="CHEBI:57783"/>
        <dbReference type="ChEBI" id="CHEBI:57792"/>
        <dbReference type="ChEBI" id="CHEBI:58262"/>
        <dbReference type="ChEBI" id="CHEBI:58349"/>
        <dbReference type="EC" id="1.1.1.267"/>
    </reaction>
    <physiologicalReaction direction="right-to-left" evidence="1">
        <dbReference type="Rhea" id="RHEA:13719"/>
    </physiologicalReaction>
</comment>
<comment type="cofactor">
    <cofactor evidence="1">
        <name>Mg(2+)</name>
        <dbReference type="ChEBI" id="CHEBI:18420"/>
    </cofactor>
    <cofactor evidence="1">
        <name>Mn(2+)</name>
        <dbReference type="ChEBI" id="CHEBI:29035"/>
    </cofactor>
</comment>
<comment type="pathway">
    <text evidence="1">Isoprenoid biosynthesis; isopentenyl diphosphate biosynthesis via DXP pathway; isopentenyl diphosphate from 1-deoxy-D-xylulose 5-phosphate: step 1/6.</text>
</comment>
<comment type="similarity">
    <text evidence="1">Belongs to the DXR family.</text>
</comment>
<dbReference type="EC" id="1.1.1.267" evidence="1"/>
<dbReference type="EMBL" id="CP000269">
    <property type="protein sequence ID" value="ABR88508.1"/>
    <property type="molecule type" value="Genomic_DNA"/>
</dbReference>
<dbReference type="RefSeq" id="WP_012079905.1">
    <property type="nucleotide sequence ID" value="NC_009659.1"/>
</dbReference>
<dbReference type="SMR" id="A6SZP5"/>
<dbReference type="STRING" id="375286.mma_2052"/>
<dbReference type="KEGG" id="mms:mma_2052"/>
<dbReference type="eggNOG" id="COG0743">
    <property type="taxonomic scope" value="Bacteria"/>
</dbReference>
<dbReference type="HOGENOM" id="CLU_035714_0_1_4"/>
<dbReference type="OrthoDB" id="9806546at2"/>
<dbReference type="UniPathway" id="UPA00056">
    <property type="reaction ID" value="UER00092"/>
</dbReference>
<dbReference type="Proteomes" id="UP000006388">
    <property type="component" value="Chromosome"/>
</dbReference>
<dbReference type="GO" id="GO:0030604">
    <property type="term" value="F:1-deoxy-D-xylulose-5-phosphate reductoisomerase activity"/>
    <property type="evidence" value="ECO:0007669"/>
    <property type="project" value="UniProtKB-UniRule"/>
</dbReference>
<dbReference type="GO" id="GO:0030145">
    <property type="term" value="F:manganese ion binding"/>
    <property type="evidence" value="ECO:0007669"/>
    <property type="project" value="TreeGrafter"/>
</dbReference>
<dbReference type="GO" id="GO:0070402">
    <property type="term" value="F:NADPH binding"/>
    <property type="evidence" value="ECO:0007669"/>
    <property type="project" value="InterPro"/>
</dbReference>
<dbReference type="GO" id="GO:0051484">
    <property type="term" value="P:isopentenyl diphosphate biosynthetic process, methylerythritol 4-phosphate pathway involved in terpenoid biosynthetic process"/>
    <property type="evidence" value="ECO:0007669"/>
    <property type="project" value="TreeGrafter"/>
</dbReference>
<dbReference type="FunFam" id="3.40.50.720:FF:000045">
    <property type="entry name" value="1-deoxy-D-xylulose 5-phosphate reductoisomerase"/>
    <property type="match status" value="1"/>
</dbReference>
<dbReference type="Gene3D" id="1.10.1740.10">
    <property type="match status" value="1"/>
</dbReference>
<dbReference type="Gene3D" id="3.40.50.720">
    <property type="entry name" value="NAD(P)-binding Rossmann-like Domain"/>
    <property type="match status" value="1"/>
</dbReference>
<dbReference type="HAMAP" id="MF_00183">
    <property type="entry name" value="DXP_reductoisom"/>
    <property type="match status" value="1"/>
</dbReference>
<dbReference type="InterPro" id="IPR003821">
    <property type="entry name" value="DXP_reductoisomerase"/>
</dbReference>
<dbReference type="InterPro" id="IPR013644">
    <property type="entry name" value="DXP_reductoisomerase_C"/>
</dbReference>
<dbReference type="InterPro" id="IPR013512">
    <property type="entry name" value="DXP_reductoisomerase_N"/>
</dbReference>
<dbReference type="InterPro" id="IPR026877">
    <property type="entry name" value="DXPR_C"/>
</dbReference>
<dbReference type="InterPro" id="IPR036169">
    <property type="entry name" value="DXPR_C_sf"/>
</dbReference>
<dbReference type="InterPro" id="IPR036291">
    <property type="entry name" value="NAD(P)-bd_dom_sf"/>
</dbReference>
<dbReference type="NCBIfam" id="TIGR00243">
    <property type="entry name" value="Dxr"/>
    <property type="match status" value="1"/>
</dbReference>
<dbReference type="NCBIfam" id="NF003938">
    <property type="entry name" value="PRK05447.1-1"/>
    <property type="match status" value="1"/>
</dbReference>
<dbReference type="NCBIfam" id="NF009114">
    <property type="entry name" value="PRK12464.1"/>
    <property type="match status" value="1"/>
</dbReference>
<dbReference type="PANTHER" id="PTHR30525">
    <property type="entry name" value="1-DEOXY-D-XYLULOSE 5-PHOSPHATE REDUCTOISOMERASE"/>
    <property type="match status" value="1"/>
</dbReference>
<dbReference type="PANTHER" id="PTHR30525:SF0">
    <property type="entry name" value="1-DEOXY-D-XYLULOSE 5-PHOSPHATE REDUCTOISOMERASE, CHLOROPLASTIC"/>
    <property type="match status" value="1"/>
</dbReference>
<dbReference type="Pfam" id="PF08436">
    <property type="entry name" value="DXP_redisom_C"/>
    <property type="match status" value="1"/>
</dbReference>
<dbReference type="Pfam" id="PF02670">
    <property type="entry name" value="DXP_reductoisom"/>
    <property type="match status" value="1"/>
</dbReference>
<dbReference type="Pfam" id="PF13288">
    <property type="entry name" value="DXPR_C"/>
    <property type="match status" value="1"/>
</dbReference>
<dbReference type="PIRSF" id="PIRSF006205">
    <property type="entry name" value="Dxp_reductismrs"/>
    <property type="match status" value="1"/>
</dbReference>
<dbReference type="SUPFAM" id="SSF69055">
    <property type="entry name" value="1-deoxy-D-xylulose-5-phosphate reductoisomerase, C-terminal domain"/>
    <property type="match status" value="1"/>
</dbReference>
<dbReference type="SUPFAM" id="SSF55347">
    <property type="entry name" value="Glyceraldehyde-3-phosphate dehydrogenase-like, C-terminal domain"/>
    <property type="match status" value="1"/>
</dbReference>
<dbReference type="SUPFAM" id="SSF51735">
    <property type="entry name" value="NAD(P)-binding Rossmann-fold domains"/>
    <property type="match status" value="1"/>
</dbReference>
<organism>
    <name type="scientific">Janthinobacterium sp. (strain Marseille)</name>
    <name type="common">Minibacterium massiliensis</name>
    <dbReference type="NCBI Taxonomy" id="375286"/>
    <lineage>
        <taxon>Bacteria</taxon>
        <taxon>Pseudomonadati</taxon>
        <taxon>Pseudomonadota</taxon>
        <taxon>Betaproteobacteria</taxon>
        <taxon>Burkholderiales</taxon>
        <taxon>Oxalobacteraceae</taxon>
        <taxon>Janthinobacterium</taxon>
    </lineage>
</organism>
<feature type="chain" id="PRO_1000058414" description="1-deoxy-D-xylulose 5-phosphate reductoisomerase">
    <location>
        <begin position="1"/>
        <end position="390"/>
    </location>
</feature>
<feature type="binding site" evidence="1">
    <location>
        <position position="10"/>
    </location>
    <ligand>
        <name>NADPH</name>
        <dbReference type="ChEBI" id="CHEBI:57783"/>
    </ligand>
</feature>
<feature type="binding site" evidence="1">
    <location>
        <position position="11"/>
    </location>
    <ligand>
        <name>NADPH</name>
        <dbReference type="ChEBI" id="CHEBI:57783"/>
    </ligand>
</feature>
<feature type="binding site" evidence="1">
    <location>
        <position position="12"/>
    </location>
    <ligand>
        <name>NADPH</name>
        <dbReference type="ChEBI" id="CHEBI:57783"/>
    </ligand>
</feature>
<feature type="binding site" evidence="1">
    <location>
        <position position="13"/>
    </location>
    <ligand>
        <name>NADPH</name>
        <dbReference type="ChEBI" id="CHEBI:57783"/>
    </ligand>
</feature>
<feature type="binding site" evidence="1">
    <location>
        <position position="124"/>
    </location>
    <ligand>
        <name>NADPH</name>
        <dbReference type="ChEBI" id="CHEBI:57783"/>
    </ligand>
</feature>
<feature type="binding site" evidence="1">
    <location>
        <position position="125"/>
    </location>
    <ligand>
        <name>1-deoxy-D-xylulose 5-phosphate</name>
        <dbReference type="ChEBI" id="CHEBI:57792"/>
    </ligand>
</feature>
<feature type="binding site" evidence="1">
    <location>
        <position position="126"/>
    </location>
    <ligand>
        <name>NADPH</name>
        <dbReference type="ChEBI" id="CHEBI:57783"/>
    </ligand>
</feature>
<feature type="binding site" evidence="1">
    <location>
        <position position="150"/>
    </location>
    <ligand>
        <name>Mn(2+)</name>
        <dbReference type="ChEBI" id="CHEBI:29035"/>
    </ligand>
</feature>
<feature type="binding site" evidence="1">
    <location>
        <position position="151"/>
    </location>
    <ligand>
        <name>1-deoxy-D-xylulose 5-phosphate</name>
        <dbReference type="ChEBI" id="CHEBI:57792"/>
    </ligand>
</feature>
<feature type="binding site" evidence="1">
    <location>
        <position position="152"/>
    </location>
    <ligand>
        <name>1-deoxy-D-xylulose 5-phosphate</name>
        <dbReference type="ChEBI" id="CHEBI:57792"/>
    </ligand>
</feature>
<feature type="binding site" evidence="1">
    <location>
        <position position="152"/>
    </location>
    <ligand>
        <name>Mn(2+)</name>
        <dbReference type="ChEBI" id="CHEBI:29035"/>
    </ligand>
</feature>
<feature type="binding site" evidence="1">
    <location>
        <position position="181"/>
    </location>
    <ligand>
        <name>1-deoxy-D-xylulose 5-phosphate</name>
        <dbReference type="ChEBI" id="CHEBI:57792"/>
    </ligand>
</feature>
<feature type="binding site" evidence="1">
    <location>
        <position position="204"/>
    </location>
    <ligand>
        <name>1-deoxy-D-xylulose 5-phosphate</name>
        <dbReference type="ChEBI" id="CHEBI:57792"/>
    </ligand>
</feature>
<feature type="binding site" evidence="1">
    <location>
        <position position="210"/>
    </location>
    <ligand>
        <name>NADPH</name>
        <dbReference type="ChEBI" id="CHEBI:57783"/>
    </ligand>
</feature>
<feature type="binding site" evidence="1">
    <location>
        <position position="217"/>
    </location>
    <ligand>
        <name>1-deoxy-D-xylulose 5-phosphate</name>
        <dbReference type="ChEBI" id="CHEBI:57792"/>
    </ligand>
</feature>
<feature type="binding site" evidence="1">
    <location>
        <position position="222"/>
    </location>
    <ligand>
        <name>1-deoxy-D-xylulose 5-phosphate</name>
        <dbReference type="ChEBI" id="CHEBI:57792"/>
    </ligand>
</feature>
<feature type="binding site" evidence="1">
    <location>
        <position position="223"/>
    </location>
    <ligand>
        <name>1-deoxy-D-xylulose 5-phosphate</name>
        <dbReference type="ChEBI" id="CHEBI:57792"/>
    </ligand>
</feature>
<feature type="binding site" evidence="1">
    <location>
        <position position="226"/>
    </location>
    <ligand>
        <name>1-deoxy-D-xylulose 5-phosphate</name>
        <dbReference type="ChEBI" id="CHEBI:57792"/>
    </ligand>
</feature>
<feature type="binding site" evidence="1">
    <location>
        <position position="226"/>
    </location>
    <ligand>
        <name>Mn(2+)</name>
        <dbReference type="ChEBI" id="CHEBI:29035"/>
    </ligand>
</feature>
<name>DXR_JANMA</name>
<protein>
    <recommendedName>
        <fullName evidence="1">1-deoxy-D-xylulose 5-phosphate reductoisomerase</fullName>
        <shortName evidence="1">DXP reductoisomerase</shortName>
        <ecNumber evidence="1">1.1.1.267</ecNumber>
    </recommendedName>
    <alternativeName>
        <fullName evidence="1">1-deoxyxylulose-5-phosphate reductoisomerase</fullName>
    </alternativeName>
    <alternativeName>
        <fullName evidence="1">2-C-methyl-D-erythritol 4-phosphate synthase</fullName>
    </alternativeName>
</protein>
<gene>
    <name evidence="1" type="primary">dxr</name>
    <name type="ordered locus">mma_2052</name>
</gene>
<sequence>MQQITILGSTGSVGVSTLDVIARHPDRYSVYALTAQSKVEELAQQCARFKPQVAVVGSAEAAKKLQVLLDAQGLHTQVGYGEAALCAVASAPECDSVMAAIVGAAGLAPTLAAARSGKRVLLANKEALVMSGPLLMEAVAASGAILMPIDSEHNAIFQCMPATCQRTPLAHGVEKILLTASGGPFLKRDVNTLDQVSWQEAVAHPKWVMGRKISVDSATMMNKGLEVIEAHWLFDLPAERIEVVIHPQSVVHSMVSYVDGSVLAQLGNPDMRTPIAHALAYPERISSGVPPIDLIQIAQLSFERPDFLRFPCLKLAYDALQAGGSAPAIMNAANEIAVQAFLDSRIGFRAIDQLIARVMDVMPSVAITDIESVFAQDRCARELANSFIPS</sequence>
<proteinExistence type="inferred from homology"/>
<accession>A6SZP5</accession>
<keyword id="KW-0414">Isoprene biosynthesis</keyword>
<keyword id="KW-0464">Manganese</keyword>
<keyword id="KW-0479">Metal-binding</keyword>
<keyword id="KW-0521">NADP</keyword>
<keyword id="KW-0560">Oxidoreductase</keyword>
<reference key="1">
    <citation type="journal article" date="2007" name="PLoS Genet.">
        <title>Genome analysis of Minibacterium massiliensis highlights the convergent evolution of water-living bacteria.</title>
        <authorList>
            <person name="Audic S."/>
            <person name="Robert C."/>
            <person name="Campagna B."/>
            <person name="Parinello H."/>
            <person name="Claverie J.-M."/>
            <person name="Raoult D."/>
            <person name="Drancourt M."/>
        </authorList>
    </citation>
    <scope>NUCLEOTIDE SEQUENCE [LARGE SCALE GENOMIC DNA]</scope>
    <source>
        <strain>Marseille</strain>
    </source>
</reference>